<proteinExistence type="inferred from homology"/>
<evidence type="ECO:0000255" key="1">
    <source>
        <dbReference type="HAMAP-Rule" id="MF_01358"/>
    </source>
</evidence>
<reference key="1">
    <citation type="submission" date="2005-07" db="EMBL/GenBank/DDBJ databases">
        <title>Complete sequence of Synechococcus sp. CC9605.</title>
        <authorList>
            <consortium name="US DOE Joint Genome Institute"/>
            <person name="Copeland A."/>
            <person name="Lucas S."/>
            <person name="Lapidus A."/>
            <person name="Barry K."/>
            <person name="Detter J.C."/>
            <person name="Glavina T."/>
            <person name="Hammon N."/>
            <person name="Israni S."/>
            <person name="Pitluck S."/>
            <person name="Schmutz J."/>
            <person name="Martinez M."/>
            <person name="Larimer F."/>
            <person name="Land M."/>
            <person name="Kyrpides N."/>
            <person name="Ivanova N."/>
            <person name="Richardson P."/>
        </authorList>
    </citation>
    <scope>NUCLEOTIDE SEQUENCE [LARGE SCALE GENOMIC DNA]</scope>
    <source>
        <strain>CC9605</strain>
    </source>
</reference>
<protein>
    <recommendedName>
        <fullName evidence="1">NAD(P)H-quinone oxidoreductase subunit H</fullName>
        <ecNumber evidence="1">7.1.1.-</ecNumber>
    </recommendedName>
    <alternativeName>
        <fullName>NAD(P)H dehydrogenase subunit H</fullName>
    </alternativeName>
    <alternativeName>
        <fullName evidence="1">NADH-plastoquinone oxidoreductase subunit H</fullName>
    </alternativeName>
    <alternativeName>
        <fullName evidence="1">NDH-1 subunit H</fullName>
        <shortName evidence="1">NDH-H</shortName>
    </alternativeName>
</protein>
<sequence>MTQLETRTEPMVVNFGPHHPSMHGVLRLVVTLDGEDVVDCEPVIGYLHRGMEKIAENRTNVMFVPYVSRMDYAAGMFYEAIVVNAPEKLANIPVPKRASYIRVLMLELNRIANHLLWLGPFLADVGAQTPFFYIFREREMIYDLWEAATGQRLINNNYFRIGGVAADLPWGWLEKCRDFCDWFGPKIDEYEKLITNNPIFRRRIEGLGRIEKEDAINWSLSGPMLRASGVPWDLRKVDHYECYDDFDWQVAWEKEGDCYARYRVRIEEMRQSLKILRQACDMIPGGPTENLEAKRLNEGKGSDAAGFDFQYVAKKVAPTFKIPNGELYTRLESGKGEIGVFIQGNNDVTPWRFKIRAADSNNLQILPHILKGHKVADIMAILGSIDVIMGSVDR</sequence>
<organism>
    <name type="scientific">Synechococcus sp. (strain CC9605)</name>
    <dbReference type="NCBI Taxonomy" id="110662"/>
    <lineage>
        <taxon>Bacteria</taxon>
        <taxon>Bacillati</taxon>
        <taxon>Cyanobacteriota</taxon>
        <taxon>Cyanophyceae</taxon>
        <taxon>Synechococcales</taxon>
        <taxon>Synechococcaceae</taxon>
        <taxon>Synechococcus</taxon>
    </lineage>
</organism>
<feature type="chain" id="PRO_0000371934" description="NAD(P)H-quinone oxidoreductase subunit H">
    <location>
        <begin position="1"/>
        <end position="394"/>
    </location>
</feature>
<keyword id="KW-0472">Membrane</keyword>
<keyword id="KW-0520">NAD</keyword>
<keyword id="KW-0521">NADP</keyword>
<keyword id="KW-0618">Plastoquinone</keyword>
<keyword id="KW-0874">Quinone</keyword>
<keyword id="KW-0793">Thylakoid</keyword>
<keyword id="KW-1278">Translocase</keyword>
<keyword id="KW-0813">Transport</keyword>
<gene>
    <name evidence="1" type="primary">ndhH</name>
    <name type="ordered locus">Syncc9605_2432</name>
</gene>
<name>NDHH_SYNSC</name>
<comment type="function">
    <text evidence="1">NDH-1 shuttles electrons from an unknown electron donor, via FMN and iron-sulfur (Fe-S) centers, to quinones in the respiratory and/or the photosynthetic chain. The immediate electron acceptor for the enzyme in this species is believed to be plastoquinone. Couples the redox reaction to proton translocation, and thus conserves the redox energy in a proton gradient. Cyanobacterial NDH-1 also plays a role in inorganic carbon-concentration.</text>
</comment>
<comment type="catalytic activity">
    <reaction evidence="1">
        <text>a plastoquinone + NADH + (n+1) H(+)(in) = a plastoquinol + NAD(+) + n H(+)(out)</text>
        <dbReference type="Rhea" id="RHEA:42608"/>
        <dbReference type="Rhea" id="RHEA-COMP:9561"/>
        <dbReference type="Rhea" id="RHEA-COMP:9562"/>
        <dbReference type="ChEBI" id="CHEBI:15378"/>
        <dbReference type="ChEBI" id="CHEBI:17757"/>
        <dbReference type="ChEBI" id="CHEBI:57540"/>
        <dbReference type="ChEBI" id="CHEBI:57945"/>
        <dbReference type="ChEBI" id="CHEBI:62192"/>
    </reaction>
</comment>
<comment type="catalytic activity">
    <reaction evidence="1">
        <text>a plastoquinone + NADPH + (n+1) H(+)(in) = a plastoquinol + NADP(+) + n H(+)(out)</text>
        <dbReference type="Rhea" id="RHEA:42612"/>
        <dbReference type="Rhea" id="RHEA-COMP:9561"/>
        <dbReference type="Rhea" id="RHEA-COMP:9562"/>
        <dbReference type="ChEBI" id="CHEBI:15378"/>
        <dbReference type="ChEBI" id="CHEBI:17757"/>
        <dbReference type="ChEBI" id="CHEBI:57783"/>
        <dbReference type="ChEBI" id="CHEBI:58349"/>
        <dbReference type="ChEBI" id="CHEBI:62192"/>
    </reaction>
</comment>
<comment type="subunit">
    <text evidence="1">NDH-1 can be composed of about 15 different subunits; different subcomplexes with different compositions have been identified which probably have different functions.</text>
</comment>
<comment type="subcellular location">
    <subcellularLocation>
        <location evidence="1">Cellular thylakoid membrane</location>
        <topology evidence="1">Peripheral membrane protein</topology>
        <orientation evidence="1">Cytoplasmic side</orientation>
    </subcellularLocation>
</comment>
<comment type="similarity">
    <text evidence="1">Belongs to the complex I 49 kDa subunit family.</text>
</comment>
<dbReference type="EC" id="7.1.1.-" evidence="1"/>
<dbReference type="EMBL" id="CP000110">
    <property type="protein sequence ID" value="ABB36164.1"/>
    <property type="molecule type" value="Genomic_DNA"/>
</dbReference>
<dbReference type="RefSeq" id="WP_011365360.1">
    <property type="nucleotide sequence ID" value="NC_007516.1"/>
</dbReference>
<dbReference type="SMR" id="Q3AGW8"/>
<dbReference type="STRING" id="110662.Syncc9605_2432"/>
<dbReference type="KEGG" id="syd:Syncc9605_2432"/>
<dbReference type="eggNOG" id="COG0649">
    <property type="taxonomic scope" value="Bacteria"/>
</dbReference>
<dbReference type="HOGENOM" id="CLU_015134_1_2_3"/>
<dbReference type="OrthoDB" id="9801496at2"/>
<dbReference type="GO" id="GO:0031676">
    <property type="term" value="C:plasma membrane-derived thylakoid membrane"/>
    <property type="evidence" value="ECO:0007669"/>
    <property type="project" value="UniProtKB-SubCell"/>
</dbReference>
<dbReference type="GO" id="GO:0051287">
    <property type="term" value="F:NAD binding"/>
    <property type="evidence" value="ECO:0007669"/>
    <property type="project" value="InterPro"/>
</dbReference>
<dbReference type="GO" id="GO:0016655">
    <property type="term" value="F:oxidoreductase activity, acting on NAD(P)H, quinone or similar compound as acceptor"/>
    <property type="evidence" value="ECO:0007669"/>
    <property type="project" value="UniProtKB-UniRule"/>
</dbReference>
<dbReference type="GO" id="GO:0048038">
    <property type="term" value="F:quinone binding"/>
    <property type="evidence" value="ECO:0007669"/>
    <property type="project" value="UniProtKB-KW"/>
</dbReference>
<dbReference type="GO" id="GO:0019684">
    <property type="term" value="P:photosynthesis, light reaction"/>
    <property type="evidence" value="ECO:0007669"/>
    <property type="project" value="UniProtKB-UniRule"/>
</dbReference>
<dbReference type="Gene3D" id="1.10.645.10">
    <property type="entry name" value="Cytochrome-c3 Hydrogenase, chain B"/>
    <property type="match status" value="1"/>
</dbReference>
<dbReference type="HAMAP" id="MF_01358">
    <property type="entry name" value="NDH1_NuoD"/>
    <property type="match status" value="1"/>
</dbReference>
<dbReference type="InterPro" id="IPR001135">
    <property type="entry name" value="NADH_Q_OxRdtase_suD"/>
</dbReference>
<dbReference type="InterPro" id="IPR014029">
    <property type="entry name" value="NADH_UbQ_OxRdtase_49kDa_CS"/>
</dbReference>
<dbReference type="InterPro" id="IPR022885">
    <property type="entry name" value="NDH1_su_D/H"/>
</dbReference>
<dbReference type="InterPro" id="IPR029014">
    <property type="entry name" value="NiFe-Hase_large"/>
</dbReference>
<dbReference type="NCBIfam" id="NF004739">
    <property type="entry name" value="PRK06075.1"/>
    <property type="match status" value="1"/>
</dbReference>
<dbReference type="NCBIfam" id="NF005649">
    <property type="entry name" value="PRK07415.1"/>
    <property type="match status" value="1"/>
</dbReference>
<dbReference type="PANTHER" id="PTHR11993:SF10">
    <property type="entry name" value="NADH DEHYDROGENASE [UBIQUINONE] IRON-SULFUR PROTEIN 2, MITOCHONDRIAL"/>
    <property type="match status" value="1"/>
</dbReference>
<dbReference type="PANTHER" id="PTHR11993">
    <property type="entry name" value="NADH-UBIQUINONE OXIDOREDUCTASE 49 KDA SUBUNIT"/>
    <property type="match status" value="1"/>
</dbReference>
<dbReference type="Pfam" id="PF00346">
    <property type="entry name" value="Complex1_49kDa"/>
    <property type="match status" value="1"/>
</dbReference>
<dbReference type="SUPFAM" id="SSF56762">
    <property type="entry name" value="HydB/Nqo4-like"/>
    <property type="match status" value="1"/>
</dbReference>
<dbReference type="PROSITE" id="PS00535">
    <property type="entry name" value="COMPLEX1_49K"/>
    <property type="match status" value="1"/>
</dbReference>
<accession>Q3AGW8</accession>